<proteinExistence type="inferred from homology"/>
<keyword id="KW-1003">Cell membrane</keyword>
<keyword id="KW-0204">Cytolysis</keyword>
<keyword id="KW-0472">Membrane</keyword>
<keyword id="KW-1185">Reference proteome</keyword>
<keyword id="KW-0812">Transmembrane</keyword>
<keyword id="KW-1133">Transmembrane helix</keyword>
<reference key="1">
    <citation type="journal article" date="2003" name="Nature">
        <title>The genome sequence of Bacillus anthracis Ames and comparison to closely related bacteria.</title>
        <authorList>
            <person name="Read T.D."/>
            <person name="Peterson S.N."/>
            <person name="Tourasse N.J."/>
            <person name="Baillie L.W."/>
            <person name="Paulsen I.T."/>
            <person name="Nelson K.E."/>
            <person name="Tettelin H."/>
            <person name="Fouts D.E."/>
            <person name="Eisen J.A."/>
            <person name="Gill S.R."/>
            <person name="Holtzapple E.K."/>
            <person name="Okstad O.A."/>
            <person name="Helgason E."/>
            <person name="Rilstone J."/>
            <person name="Wu M."/>
            <person name="Kolonay J.F."/>
            <person name="Beanan M.J."/>
            <person name="Dodson R.J."/>
            <person name="Brinkac L.M."/>
            <person name="Gwinn M.L."/>
            <person name="DeBoy R.T."/>
            <person name="Madpu R."/>
            <person name="Daugherty S.C."/>
            <person name="Durkin A.S."/>
            <person name="Haft D.H."/>
            <person name="Nelson W.C."/>
            <person name="Peterson J.D."/>
            <person name="Pop M."/>
            <person name="Khouri H.M."/>
            <person name="Radune D."/>
            <person name="Benton J.L."/>
            <person name="Mahamoud Y."/>
            <person name="Jiang L."/>
            <person name="Hance I.R."/>
            <person name="Weidman J.F."/>
            <person name="Berry K.J."/>
            <person name="Plaut R.D."/>
            <person name="Wolf A.M."/>
            <person name="Watkins K.L."/>
            <person name="Nierman W.C."/>
            <person name="Hazen A."/>
            <person name="Cline R.T."/>
            <person name="Redmond C."/>
            <person name="Thwaite J.E."/>
            <person name="White O."/>
            <person name="Salzberg S.L."/>
            <person name="Thomason B."/>
            <person name="Friedlander A.M."/>
            <person name="Koehler T.M."/>
            <person name="Hanna P.C."/>
            <person name="Kolstoe A.-B."/>
            <person name="Fraser C.M."/>
        </authorList>
    </citation>
    <scope>NUCLEOTIDE SEQUENCE [LARGE SCALE GENOMIC DNA]</scope>
    <source>
        <strain>Ames / isolate Porton</strain>
    </source>
</reference>
<reference key="2">
    <citation type="journal article" date="2009" name="J. Bacteriol.">
        <title>The complete genome sequence of Bacillus anthracis Ames 'Ancestor'.</title>
        <authorList>
            <person name="Ravel J."/>
            <person name="Jiang L."/>
            <person name="Stanley S.T."/>
            <person name="Wilson M.R."/>
            <person name="Decker R.S."/>
            <person name="Read T.D."/>
            <person name="Worsham P."/>
            <person name="Keim P.S."/>
            <person name="Salzberg S.L."/>
            <person name="Fraser-Liggett C.M."/>
            <person name="Rasko D.A."/>
        </authorList>
    </citation>
    <scope>NUCLEOTIDE SEQUENCE [LARGE SCALE GENOMIC DNA]</scope>
    <source>
        <strain>Ames ancestor</strain>
    </source>
</reference>
<reference key="3">
    <citation type="submission" date="2004-01" db="EMBL/GenBank/DDBJ databases">
        <title>Complete genome sequence of Bacillus anthracis Sterne.</title>
        <authorList>
            <person name="Brettin T.S."/>
            <person name="Bruce D."/>
            <person name="Challacombe J.F."/>
            <person name="Gilna P."/>
            <person name="Han C."/>
            <person name="Hill K."/>
            <person name="Hitchcock P."/>
            <person name="Jackson P."/>
            <person name="Keim P."/>
            <person name="Longmire J."/>
            <person name="Lucas S."/>
            <person name="Okinaka R."/>
            <person name="Richardson P."/>
            <person name="Rubin E."/>
            <person name="Tice H."/>
        </authorList>
    </citation>
    <scope>NUCLEOTIDE SEQUENCE [LARGE SCALE GENOMIC DNA]</scope>
    <source>
        <strain>Sterne</strain>
    </source>
</reference>
<organism>
    <name type="scientific">Bacillus anthracis</name>
    <dbReference type="NCBI Taxonomy" id="1392"/>
    <lineage>
        <taxon>Bacteria</taxon>
        <taxon>Bacillati</taxon>
        <taxon>Bacillota</taxon>
        <taxon>Bacilli</taxon>
        <taxon>Bacillales</taxon>
        <taxon>Bacillaceae</taxon>
        <taxon>Bacillus</taxon>
        <taxon>Bacillus cereus group</taxon>
    </lineage>
</organism>
<evidence type="ECO:0000255" key="1">
    <source>
        <dbReference type="HAMAP-Rule" id="MF_01141"/>
    </source>
</evidence>
<name>LRGA_BACAN</name>
<feature type="chain" id="PRO_0000213187" description="Antiholin-like protein LrgA">
    <location>
        <begin position="1"/>
        <end position="143"/>
    </location>
</feature>
<feature type="transmembrane region" description="Helical" evidence="1">
    <location>
        <begin position="7"/>
        <end position="26"/>
    </location>
</feature>
<feature type="transmembrane region" description="Helical" evidence="1">
    <location>
        <begin position="31"/>
        <end position="53"/>
    </location>
</feature>
<feature type="transmembrane region" description="Helical" evidence="1">
    <location>
        <begin position="58"/>
        <end position="80"/>
    </location>
</feature>
<feature type="transmembrane region" description="Helical" evidence="1">
    <location>
        <begin position="90"/>
        <end position="112"/>
    </location>
</feature>
<sequence length="143" mass="15424">MSTKKVYSFLSQAFIFSAIMLISNIIATHLPIPMPSSVIGLVILFSLLCLKVIKLEQVESLGTALTGIIGFLFVPSGISVINSLGVMGQYFVQILTVIVVATVILLAVTGLFAQFILGKDEKETEDTKELKVVNKGRKHGKVA</sequence>
<accession>Q81JL4</accession>
<accession>Q6HQ57</accession>
<accession>Q6KJJ8</accession>
<dbReference type="EMBL" id="AE016879">
    <property type="protein sequence ID" value="AAP29322.1"/>
    <property type="molecule type" value="Genomic_DNA"/>
</dbReference>
<dbReference type="EMBL" id="AE017334">
    <property type="protein sequence ID" value="AAT34847.1"/>
    <property type="molecule type" value="Genomic_DNA"/>
</dbReference>
<dbReference type="EMBL" id="AE017225">
    <property type="protein sequence ID" value="AAT57581.1"/>
    <property type="molecule type" value="Genomic_DNA"/>
</dbReference>
<dbReference type="RefSeq" id="NP_847836.1">
    <property type="nucleotide sequence ID" value="NC_003997.3"/>
</dbReference>
<dbReference type="RefSeq" id="WP_000104901.1">
    <property type="nucleotide sequence ID" value="NZ_WXXJ01000017.1"/>
</dbReference>
<dbReference type="RefSeq" id="YP_031531.1">
    <property type="nucleotide sequence ID" value="NC_005945.1"/>
</dbReference>
<dbReference type="SMR" id="Q81JL4"/>
<dbReference type="STRING" id="261594.GBAA_5690"/>
<dbReference type="DNASU" id="1085430"/>
<dbReference type="GeneID" id="93005686"/>
<dbReference type="KEGG" id="ban:BA_5690"/>
<dbReference type="KEGG" id="banh:HYU01_27775"/>
<dbReference type="KEGG" id="bar:GBAA_5690"/>
<dbReference type="KEGG" id="bat:BAS5294"/>
<dbReference type="PATRIC" id="fig|198094.11.peg.5652"/>
<dbReference type="eggNOG" id="COG1380">
    <property type="taxonomic scope" value="Bacteria"/>
</dbReference>
<dbReference type="HOGENOM" id="CLU_113736_0_1_9"/>
<dbReference type="OMA" id="TGWMTQL"/>
<dbReference type="OrthoDB" id="3176438at2"/>
<dbReference type="Proteomes" id="UP000000427">
    <property type="component" value="Chromosome"/>
</dbReference>
<dbReference type="Proteomes" id="UP000000594">
    <property type="component" value="Chromosome"/>
</dbReference>
<dbReference type="GO" id="GO:0005886">
    <property type="term" value="C:plasma membrane"/>
    <property type="evidence" value="ECO:0007669"/>
    <property type="project" value="UniProtKB-SubCell"/>
</dbReference>
<dbReference type="GO" id="GO:0019835">
    <property type="term" value="P:cytolysis"/>
    <property type="evidence" value="ECO:0007669"/>
    <property type="project" value="UniProtKB-UniRule"/>
</dbReference>
<dbReference type="GO" id="GO:0031640">
    <property type="term" value="P:killing of cells of another organism"/>
    <property type="evidence" value="ECO:0007669"/>
    <property type="project" value="UniProtKB-KW"/>
</dbReference>
<dbReference type="GO" id="GO:0012501">
    <property type="term" value="P:programmed cell death"/>
    <property type="evidence" value="ECO:0007669"/>
    <property type="project" value="UniProtKB-UniRule"/>
</dbReference>
<dbReference type="HAMAP" id="MF_01141">
    <property type="entry name" value="LrgA"/>
    <property type="match status" value="1"/>
</dbReference>
<dbReference type="InterPro" id="IPR023736">
    <property type="entry name" value="Antiholin-like_LrgA"/>
</dbReference>
<dbReference type="InterPro" id="IPR005538">
    <property type="entry name" value="LrgA/CidA"/>
</dbReference>
<dbReference type="NCBIfam" id="NF003155">
    <property type="entry name" value="PRK04125.1"/>
    <property type="match status" value="1"/>
</dbReference>
<dbReference type="PANTHER" id="PTHR33931:SF4">
    <property type="entry name" value="ANTIHOLIN-LIKE PROTEIN LRGA"/>
    <property type="match status" value="1"/>
</dbReference>
<dbReference type="PANTHER" id="PTHR33931">
    <property type="entry name" value="HOLIN-LIKE PROTEIN CIDA-RELATED"/>
    <property type="match status" value="1"/>
</dbReference>
<dbReference type="Pfam" id="PF03788">
    <property type="entry name" value="LrgA"/>
    <property type="match status" value="1"/>
</dbReference>
<gene>
    <name evidence="1" type="primary">lrgA</name>
    <name type="ordered locus">BA_5690</name>
    <name type="ordered locus">GBAA_5690</name>
    <name type="ordered locus">BAS5294</name>
</gene>
<protein>
    <recommendedName>
        <fullName evidence="1">Antiholin-like protein LrgA</fullName>
    </recommendedName>
</protein>
<comment type="function">
    <text evidence="1">Inhibits the expression or activity of extracellular murein hydrolases by interacting, possibly with LrgB, with the holin-like protein CidA. The LrgAB and CidA proteins may affect the proton motive force of the membrane. May be involved in programmed cell death (PCD), possibly triggering PCD in response to antibiotics and environmental stresses.</text>
</comment>
<comment type="subcellular location">
    <subcellularLocation>
        <location evidence="1">Cell membrane</location>
        <topology evidence="1">Multi-pass membrane protein</topology>
    </subcellularLocation>
</comment>
<comment type="similarity">
    <text evidence="1">Belongs to the CidA/LrgA family. LrgA subfamily.</text>
</comment>